<sequence>MTFTLLPAVDVVDGQAVRLDQGEAGTEKSYGSPIAAALKWQEQGASWLHFVDLDAAFNRGSNHELMAEVVKNLDINVELTGGIRDDASLKRALATGARRVNIGTAALEKPEWIEKVLGEYGDAIAVDIAVRNIDGQWRTRGNGWVSDGGDLWEVLERLDSQGCTRFVVTDVSKDGTLSGPNIDLLRDVSAATDAKVVASGGISTLEDVLELARYEDEGIDSAIIGKALYEGRFTLKEALAAL</sequence>
<evidence type="ECO:0000255" key="1">
    <source>
        <dbReference type="HAMAP-Rule" id="MF_01014"/>
    </source>
</evidence>
<evidence type="ECO:0000305" key="2"/>
<protein>
    <recommendedName>
        <fullName evidence="1">1-(5-phosphoribosyl)-5-[(5-phosphoribosylamino)methylideneamino] imidazole-4-carboxamide isomerase</fullName>
        <ecNumber evidence="1">5.3.1.16</ecNumber>
    </recommendedName>
    <alternativeName>
        <fullName evidence="1">Phosphoribosylformimino-5-aminoimidazole carboxamide ribotide isomerase</fullName>
    </alternativeName>
</protein>
<reference key="1">
    <citation type="journal article" date="2003" name="Nucleic Acids Res.">
        <title>The complete genome sequence and analysis of Corynebacterium diphtheriae NCTC13129.</title>
        <authorList>
            <person name="Cerdeno-Tarraga A.-M."/>
            <person name="Efstratiou A."/>
            <person name="Dover L.G."/>
            <person name="Holden M.T.G."/>
            <person name="Pallen M.J."/>
            <person name="Bentley S.D."/>
            <person name="Besra G.S."/>
            <person name="Churcher C.M."/>
            <person name="James K.D."/>
            <person name="De Zoysa A."/>
            <person name="Chillingworth T."/>
            <person name="Cronin A."/>
            <person name="Dowd L."/>
            <person name="Feltwell T."/>
            <person name="Hamlin N."/>
            <person name="Holroyd S."/>
            <person name="Jagels K."/>
            <person name="Moule S."/>
            <person name="Quail M.A."/>
            <person name="Rabbinowitsch E."/>
            <person name="Rutherford K.M."/>
            <person name="Thomson N.R."/>
            <person name="Unwin L."/>
            <person name="Whitehead S."/>
            <person name="Barrell B.G."/>
            <person name="Parkhill J."/>
        </authorList>
    </citation>
    <scope>NUCLEOTIDE SEQUENCE [LARGE SCALE GENOMIC DNA]</scope>
    <source>
        <strain>ATCC 700971 / NCTC 13129 / Biotype gravis</strain>
    </source>
</reference>
<name>HIS4_CORDI</name>
<comment type="catalytic activity">
    <reaction evidence="1">
        <text>1-(5-phospho-beta-D-ribosyl)-5-[(5-phospho-beta-D-ribosylamino)methylideneamino]imidazole-4-carboxamide = 5-[(5-phospho-1-deoxy-D-ribulos-1-ylimino)methylamino]-1-(5-phospho-beta-D-ribosyl)imidazole-4-carboxamide</text>
        <dbReference type="Rhea" id="RHEA:15469"/>
        <dbReference type="ChEBI" id="CHEBI:58435"/>
        <dbReference type="ChEBI" id="CHEBI:58525"/>
        <dbReference type="EC" id="5.3.1.16"/>
    </reaction>
</comment>
<comment type="pathway">
    <text evidence="1">Amino-acid biosynthesis; L-histidine biosynthesis; L-histidine from 5-phospho-alpha-D-ribose 1-diphosphate: step 4/9.</text>
</comment>
<comment type="subcellular location">
    <subcellularLocation>
        <location evidence="1">Cytoplasm</location>
    </subcellularLocation>
</comment>
<comment type="similarity">
    <text evidence="1">Belongs to the HisA/HisF family.</text>
</comment>
<comment type="caution">
    <text evidence="2">Ala-129 is present instead of the conserved Asp which is expected to be an active site residue.</text>
</comment>
<dbReference type="EC" id="5.3.1.16" evidence="1"/>
<dbReference type="EMBL" id="BX248358">
    <property type="protein sequence ID" value="CAE50085.1"/>
    <property type="molecule type" value="Genomic_DNA"/>
</dbReference>
<dbReference type="SMR" id="P60580"/>
<dbReference type="STRING" id="257309.DIP1560"/>
<dbReference type="KEGG" id="cdi:DIP1560"/>
<dbReference type="PATRIC" id="fig|257309.4.peg.1540"/>
<dbReference type="HOGENOM" id="CLU_048577_1_1_11"/>
<dbReference type="UniPathway" id="UPA00031">
    <property type="reaction ID" value="UER00009"/>
</dbReference>
<dbReference type="Proteomes" id="UP000002198">
    <property type="component" value="Chromosome"/>
</dbReference>
<dbReference type="GO" id="GO:0005737">
    <property type="term" value="C:cytoplasm"/>
    <property type="evidence" value="ECO:0007669"/>
    <property type="project" value="UniProtKB-SubCell"/>
</dbReference>
<dbReference type="GO" id="GO:0003949">
    <property type="term" value="F:1-(5-phosphoribosyl)-5-[(5-phosphoribosylamino)methylideneamino]imidazole-4-carboxamide isomerase activity"/>
    <property type="evidence" value="ECO:0007669"/>
    <property type="project" value="UniProtKB-UniRule"/>
</dbReference>
<dbReference type="GO" id="GO:0004640">
    <property type="term" value="F:phosphoribosylanthranilate isomerase activity"/>
    <property type="evidence" value="ECO:0007669"/>
    <property type="project" value="InterPro"/>
</dbReference>
<dbReference type="GO" id="GO:0000105">
    <property type="term" value="P:L-histidine biosynthetic process"/>
    <property type="evidence" value="ECO:0007669"/>
    <property type="project" value="UniProtKB-UniRule"/>
</dbReference>
<dbReference type="GO" id="GO:0000162">
    <property type="term" value="P:L-tryptophan biosynthetic process"/>
    <property type="evidence" value="ECO:0007669"/>
    <property type="project" value="InterPro"/>
</dbReference>
<dbReference type="CDD" id="cd04732">
    <property type="entry name" value="HisA"/>
    <property type="match status" value="1"/>
</dbReference>
<dbReference type="FunFam" id="3.20.20.70:FF:000009">
    <property type="entry name" value="1-(5-phosphoribosyl)-5-[(5-phosphoribosylamino)methylideneamino] imidazole-4-carboxamide isomerase"/>
    <property type="match status" value="1"/>
</dbReference>
<dbReference type="Gene3D" id="3.20.20.70">
    <property type="entry name" value="Aldolase class I"/>
    <property type="match status" value="1"/>
</dbReference>
<dbReference type="HAMAP" id="MF_01014">
    <property type="entry name" value="HisA"/>
    <property type="match status" value="1"/>
</dbReference>
<dbReference type="InterPro" id="IPR013785">
    <property type="entry name" value="Aldolase_TIM"/>
</dbReference>
<dbReference type="InterPro" id="IPR006062">
    <property type="entry name" value="His_biosynth"/>
</dbReference>
<dbReference type="InterPro" id="IPR010188">
    <property type="entry name" value="HisA/PriA_Actinobacteria"/>
</dbReference>
<dbReference type="InterPro" id="IPR044524">
    <property type="entry name" value="Isoase_HisA-like"/>
</dbReference>
<dbReference type="InterPro" id="IPR023016">
    <property type="entry name" value="Isoase_HisA-like_bact"/>
</dbReference>
<dbReference type="InterPro" id="IPR011060">
    <property type="entry name" value="RibuloseP-bd_barrel"/>
</dbReference>
<dbReference type="NCBIfam" id="TIGR01919">
    <property type="entry name" value="hisA-trpF"/>
    <property type="match status" value="1"/>
</dbReference>
<dbReference type="PANTHER" id="PTHR43090">
    <property type="entry name" value="1-(5-PHOSPHORIBOSYL)-5-[(5-PHOSPHORIBOSYLAMINO)METHYLIDENEAMINO] IMIDAZOLE-4-CARBOXAMIDE ISOMERASE"/>
    <property type="match status" value="1"/>
</dbReference>
<dbReference type="PANTHER" id="PTHR43090:SF2">
    <property type="entry name" value="1-(5-PHOSPHORIBOSYL)-5-[(5-PHOSPHORIBOSYLAMINO)METHYLIDENEAMINO] IMIDAZOLE-4-CARBOXAMIDE ISOMERASE"/>
    <property type="match status" value="1"/>
</dbReference>
<dbReference type="Pfam" id="PF00977">
    <property type="entry name" value="His_biosynth"/>
    <property type="match status" value="1"/>
</dbReference>
<dbReference type="SUPFAM" id="SSF51366">
    <property type="entry name" value="Ribulose-phoshate binding barrel"/>
    <property type="match status" value="1"/>
</dbReference>
<gene>
    <name evidence="1" type="primary">hisA</name>
    <name type="ordered locus">DIP1560</name>
</gene>
<keyword id="KW-0028">Amino-acid biosynthesis</keyword>
<keyword id="KW-0963">Cytoplasm</keyword>
<keyword id="KW-0368">Histidine biosynthesis</keyword>
<keyword id="KW-0413">Isomerase</keyword>
<keyword id="KW-1185">Reference proteome</keyword>
<feature type="chain" id="PRO_0000141999" description="1-(5-phosphoribosyl)-5-[(5-phosphoribosylamino)methylideneamino] imidazole-4-carboxamide isomerase">
    <location>
        <begin position="1"/>
        <end position="242"/>
    </location>
</feature>
<feature type="active site" description="Proton acceptor" evidence="1">
    <location>
        <position position="10"/>
    </location>
</feature>
<organism>
    <name type="scientific">Corynebacterium diphtheriae (strain ATCC 700971 / NCTC 13129 / Biotype gravis)</name>
    <dbReference type="NCBI Taxonomy" id="257309"/>
    <lineage>
        <taxon>Bacteria</taxon>
        <taxon>Bacillati</taxon>
        <taxon>Actinomycetota</taxon>
        <taxon>Actinomycetes</taxon>
        <taxon>Mycobacteriales</taxon>
        <taxon>Corynebacteriaceae</taxon>
        <taxon>Corynebacterium</taxon>
    </lineage>
</organism>
<accession>P60580</accession>
<proteinExistence type="inferred from homology"/>